<protein>
    <recommendedName>
        <fullName evidence="3">Transcriptional elongation regulator MINIYO</fullName>
    </recommendedName>
</protein>
<reference key="1">
    <citation type="journal article" date="1999" name="Nature">
        <title>Sequence and analysis of chromosome 4 of the plant Arabidopsis thaliana.</title>
        <authorList>
            <person name="Mayer K.F.X."/>
            <person name="Schueller C."/>
            <person name="Wambutt R."/>
            <person name="Murphy G."/>
            <person name="Volckaert G."/>
            <person name="Pohl T."/>
            <person name="Duesterhoeft A."/>
            <person name="Stiekema W."/>
            <person name="Entian K.-D."/>
            <person name="Terryn N."/>
            <person name="Harris B."/>
            <person name="Ansorge W."/>
            <person name="Brandt P."/>
            <person name="Grivell L.A."/>
            <person name="Rieger M."/>
            <person name="Weichselgartner M."/>
            <person name="de Simone V."/>
            <person name="Obermaier B."/>
            <person name="Mache R."/>
            <person name="Mueller M."/>
            <person name="Kreis M."/>
            <person name="Delseny M."/>
            <person name="Puigdomenech P."/>
            <person name="Watson M."/>
            <person name="Schmidtheini T."/>
            <person name="Reichert B."/>
            <person name="Portetelle D."/>
            <person name="Perez-Alonso M."/>
            <person name="Boutry M."/>
            <person name="Bancroft I."/>
            <person name="Vos P."/>
            <person name="Hoheisel J."/>
            <person name="Zimmermann W."/>
            <person name="Wedler H."/>
            <person name="Ridley P."/>
            <person name="Langham S.-A."/>
            <person name="McCullagh B."/>
            <person name="Bilham L."/>
            <person name="Robben J."/>
            <person name="van der Schueren J."/>
            <person name="Grymonprez B."/>
            <person name="Chuang Y.-J."/>
            <person name="Vandenbussche F."/>
            <person name="Braeken M."/>
            <person name="Weltjens I."/>
            <person name="Voet M."/>
            <person name="Bastiaens I."/>
            <person name="Aert R."/>
            <person name="Defoor E."/>
            <person name="Weitzenegger T."/>
            <person name="Bothe G."/>
            <person name="Ramsperger U."/>
            <person name="Hilbert H."/>
            <person name="Braun M."/>
            <person name="Holzer E."/>
            <person name="Brandt A."/>
            <person name="Peters S."/>
            <person name="van Staveren M."/>
            <person name="Dirkse W."/>
            <person name="Mooijman P."/>
            <person name="Klein Lankhorst R."/>
            <person name="Rose M."/>
            <person name="Hauf J."/>
            <person name="Koetter P."/>
            <person name="Berneiser S."/>
            <person name="Hempel S."/>
            <person name="Feldpausch M."/>
            <person name="Lamberth S."/>
            <person name="Van den Daele H."/>
            <person name="De Keyser A."/>
            <person name="Buysshaert C."/>
            <person name="Gielen J."/>
            <person name="Villarroel R."/>
            <person name="De Clercq R."/>
            <person name="van Montagu M."/>
            <person name="Rogers J."/>
            <person name="Cronin A."/>
            <person name="Quail M.A."/>
            <person name="Bray-Allen S."/>
            <person name="Clark L."/>
            <person name="Doggett J."/>
            <person name="Hall S."/>
            <person name="Kay M."/>
            <person name="Lennard N."/>
            <person name="McLay K."/>
            <person name="Mayes R."/>
            <person name="Pettett A."/>
            <person name="Rajandream M.A."/>
            <person name="Lyne M."/>
            <person name="Benes V."/>
            <person name="Rechmann S."/>
            <person name="Borkova D."/>
            <person name="Bloecker H."/>
            <person name="Scharfe M."/>
            <person name="Grimm M."/>
            <person name="Loehnert T.-H."/>
            <person name="Dose S."/>
            <person name="de Haan M."/>
            <person name="Maarse A.C."/>
            <person name="Schaefer M."/>
            <person name="Mueller-Auer S."/>
            <person name="Gabel C."/>
            <person name="Fuchs M."/>
            <person name="Fartmann B."/>
            <person name="Granderath K."/>
            <person name="Dauner D."/>
            <person name="Herzl A."/>
            <person name="Neumann S."/>
            <person name="Argiriou A."/>
            <person name="Vitale D."/>
            <person name="Liguori R."/>
            <person name="Piravandi E."/>
            <person name="Massenet O."/>
            <person name="Quigley F."/>
            <person name="Clabauld G."/>
            <person name="Muendlein A."/>
            <person name="Felber R."/>
            <person name="Schnabl S."/>
            <person name="Hiller R."/>
            <person name="Schmidt W."/>
            <person name="Lecharny A."/>
            <person name="Aubourg S."/>
            <person name="Chefdor F."/>
            <person name="Cooke R."/>
            <person name="Berger C."/>
            <person name="Monfort A."/>
            <person name="Casacuberta E."/>
            <person name="Gibbons T."/>
            <person name="Weber N."/>
            <person name="Vandenbol M."/>
            <person name="Bargues M."/>
            <person name="Terol J."/>
            <person name="Torres A."/>
            <person name="Perez-Perez A."/>
            <person name="Purnelle B."/>
            <person name="Bent E."/>
            <person name="Johnson S."/>
            <person name="Tacon D."/>
            <person name="Jesse T."/>
            <person name="Heijnen L."/>
            <person name="Schwarz S."/>
            <person name="Scholler P."/>
            <person name="Heber S."/>
            <person name="Francs P."/>
            <person name="Bielke C."/>
            <person name="Frishman D."/>
            <person name="Haase D."/>
            <person name="Lemcke K."/>
            <person name="Mewes H.-W."/>
            <person name="Stocker S."/>
            <person name="Zaccaria P."/>
            <person name="Bevan M."/>
            <person name="Wilson R.K."/>
            <person name="de la Bastide M."/>
            <person name="Habermann K."/>
            <person name="Parnell L."/>
            <person name="Dedhia N."/>
            <person name="Gnoj L."/>
            <person name="Schutz K."/>
            <person name="Huang E."/>
            <person name="Spiegel L."/>
            <person name="Sekhon M."/>
            <person name="Murray J."/>
            <person name="Sheet P."/>
            <person name="Cordes M."/>
            <person name="Abu-Threideh J."/>
            <person name="Stoneking T."/>
            <person name="Kalicki J."/>
            <person name="Graves T."/>
            <person name="Harmon G."/>
            <person name="Edwards J."/>
            <person name="Latreille P."/>
            <person name="Courtney L."/>
            <person name="Cloud J."/>
            <person name="Abbott A."/>
            <person name="Scott K."/>
            <person name="Johnson D."/>
            <person name="Minx P."/>
            <person name="Bentley D."/>
            <person name="Fulton B."/>
            <person name="Miller N."/>
            <person name="Greco T."/>
            <person name="Kemp K."/>
            <person name="Kramer J."/>
            <person name="Fulton L."/>
            <person name="Mardis E."/>
            <person name="Dante M."/>
            <person name="Pepin K."/>
            <person name="Hillier L.W."/>
            <person name="Nelson J."/>
            <person name="Spieth J."/>
            <person name="Ryan E."/>
            <person name="Andrews S."/>
            <person name="Geisel C."/>
            <person name="Layman D."/>
            <person name="Du H."/>
            <person name="Ali J."/>
            <person name="Berghoff A."/>
            <person name="Jones K."/>
            <person name="Drone K."/>
            <person name="Cotton M."/>
            <person name="Joshu C."/>
            <person name="Antonoiu B."/>
            <person name="Zidanic M."/>
            <person name="Strong C."/>
            <person name="Sun H."/>
            <person name="Lamar B."/>
            <person name="Yordan C."/>
            <person name="Ma P."/>
            <person name="Zhong J."/>
            <person name="Preston R."/>
            <person name="Vil D."/>
            <person name="Shekher M."/>
            <person name="Matero A."/>
            <person name="Shah R."/>
            <person name="Swaby I.K."/>
            <person name="O'Shaughnessy A."/>
            <person name="Rodriguez M."/>
            <person name="Hoffman J."/>
            <person name="Till S."/>
            <person name="Granat S."/>
            <person name="Shohdy N."/>
            <person name="Hasegawa A."/>
            <person name="Hameed A."/>
            <person name="Lodhi M."/>
            <person name="Johnson A."/>
            <person name="Chen E."/>
            <person name="Marra M.A."/>
            <person name="Martienssen R."/>
            <person name="McCombie W.R."/>
        </authorList>
    </citation>
    <scope>NUCLEOTIDE SEQUENCE [LARGE SCALE GENOMIC DNA]</scope>
    <source>
        <strain>cv. Columbia</strain>
    </source>
</reference>
<reference key="2">
    <citation type="journal article" date="2017" name="Plant J.">
        <title>Araport11: a complete reannotation of the Arabidopsis thaliana reference genome.</title>
        <authorList>
            <person name="Cheng C.Y."/>
            <person name="Krishnakumar V."/>
            <person name="Chan A.P."/>
            <person name="Thibaud-Nissen F."/>
            <person name="Schobel S."/>
            <person name="Town C.D."/>
        </authorList>
    </citation>
    <scope>GENOME REANNOTATION</scope>
    <source>
        <strain>cv. Columbia</strain>
    </source>
</reference>
<reference key="3">
    <citation type="journal article" date="2002" name="Science">
        <title>Functional annotation of a full-length Arabidopsis cDNA collection.</title>
        <authorList>
            <person name="Seki M."/>
            <person name="Narusaka M."/>
            <person name="Kamiya A."/>
            <person name="Ishida J."/>
            <person name="Satou M."/>
            <person name="Sakurai T."/>
            <person name="Nakajima M."/>
            <person name="Enju A."/>
            <person name="Akiyama K."/>
            <person name="Oono Y."/>
            <person name="Muramatsu M."/>
            <person name="Hayashizaki Y."/>
            <person name="Kawai J."/>
            <person name="Carninci P."/>
            <person name="Itoh M."/>
            <person name="Ishii Y."/>
            <person name="Arakawa T."/>
            <person name="Shibata K."/>
            <person name="Shinagawa A."/>
            <person name="Shinozaki K."/>
        </authorList>
    </citation>
    <scope>NUCLEOTIDE SEQUENCE [LARGE SCALE MRNA]</scope>
    <source>
        <strain>cv. Columbia</strain>
    </source>
</reference>
<reference key="4">
    <citation type="journal article" date="2003" name="Science">
        <title>Empirical analysis of transcriptional activity in the Arabidopsis genome.</title>
        <authorList>
            <person name="Yamada K."/>
            <person name="Lim J."/>
            <person name="Dale J.M."/>
            <person name="Chen H."/>
            <person name="Shinn P."/>
            <person name="Palm C.J."/>
            <person name="Southwick A.M."/>
            <person name="Wu H.C."/>
            <person name="Kim C.J."/>
            <person name="Nguyen M."/>
            <person name="Pham P.K."/>
            <person name="Cheuk R.F."/>
            <person name="Karlin-Newmann G."/>
            <person name="Liu S.X."/>
            <person name="Lam B."/>
            <person name="Sakano H."/>
            <person name="Wu T."/>
            <person name="Yu G."/>
            <person name="Miranda M."/>
            <person name="Quach H.L."/>
            <person name="Tripp M."/>
            <person name="Chang C.H."/>
            <person name="Lee J.M."/>
            <person name="Toriumi M.J."/>
            <person name="Chan M.M."/>
            <person name="Tang C.C."/>
            <person name="Onodera C.S."/>
            <person name="Deng J.M."/>
            <person name="Akiyama K."/>
            <person name="Ansari Y."/>
            <person name="Arakawa T."/>
            <person name="Banh J."/>
            <person name="Banno F."/>
            <person name="Bowser L."/>
            <person name="Brooks S.Y."/>
            <person name="Carninci P."/>
            <person name="Chao Q."/>
            <person name="Choy N."/>
            <person name="Enju A."/>
            <person name="Goldsmith A.D."/>
            <person name="Gurjal M."/>
            <person name="Hansen N.F."/>
            <person name="Hayashizaki Y."/>
            <person name="Johnson-Hopson C."/>
            <person name="Hsuan V.W."/>
            <person name="Iida K."/>
            <person name="Karnes M."/>
            <person name="Khan S."/>
            <person name="Koesema E."/>
            <person name="Ishida J."/>
            <person name="Jiang P.X."/>
            <person name="Jones T."/>
            <person name="Kawai J."/>
            <person name="Kamiya A."/>
            <person name="Meyers C."/>
            <person name="Nakajima M."/>
            <person name="Narusaka M."/>
            <person name="Seki M."/>
            <person name="Sakurai T."/>
            <person name="Satou M."/>
            <person name="Tamse R."/>
            <person name="Vaysberg M."/>
            <person name="Wallender E.K."/>
            <person name="Wong C."/>
            <person name="Yamamura Y."/>
            <person name="Yuan S."/>
            <person name="Shinozaki K."/>
            <person name="Davis R.W."/>
            <person name="Theologis A."/>
            <person name="Ecker J.R."/>
        </authorList>
    </citation>
    <scope>NUCLEOTIDE SEQUENCE [LARGE SCALE MRNA]</scope>
    <source>
        <strain>cv. Columbia</strain>
    </source>
</reference>
<reference key="5">
    <citation type="journal article" date="2011" name="Curr. Biol.">
        <title>A molecular switch for initiating cell differentiation in Arabidopsis.</title>
        <authorList>
            <person name="Sanmartin M."/>
            <person name="Sauer M."/>
            <person name="Munoz A."/>
            <person name="Zouhar J."/>
            <person name="Ordonez A."/>
            <person name="van de Ven W.T."/>
            <person name="Caro E."/>
            <person name="de la Paz Sanchez M."/>
            <person name="Raikhel N.V."/>
            <person name="Gutierrez C."/>
            <person name="Sanchez-Serrano J.J."/>
            <person name="Rojo E."/>
        </authorList>
    </citation>
    <scope>FUNCTION</scope>
    <scope>MUTAGENESIS OF GLY-962</scope>
    <scope>DISRUPTION PHENOTYPE</scope>
    <scope>INTERACTION WITH HAG3; NRPB3 AND NRPB10L</scope>
    <scope>TISSUE SPECIFICITY</scope>
    <scope>SUBCELLULAR LOCATION</scope>
</reference>
<reference key="6">
    <citation type="journal article" date="2012" name="Transcription">
        <title>MINIYO and transcriptional elongation: lifting the roadblock to differentiation.</title>
        <authorList>
            <person name="Sanmartin M."/>
            <person name="Sauer M."/>
            <person name="Munoz A."/>
            <person name="Rojo E."/>
        </authorList>
    </citation>
    <scope>REVIEW</scope>
</reference>
<name>IYO_ARATH</name>
<comment type="function">
    <text evidence="2">Positive regulator of transcriptional elongation that is essential for cells to initiate differentiation. Interacts with RNA polymerase II and the Elongator complex and is required to sustain global levels of transcriptional elongation activity, specifically in differentiating tissues.</text>
</comment>
<comment type="subunit">
    <text evidence="2">Interacts with HAG3, NRPB3 and NRPB10L.</text>
</comment>
<comment type="subcellular location">
    <subcellularLocation>
        <location evidence="2">Cytoplasm</location>
    </subcellularLocation>
    <subcellularLocation>
        <location evidence="2">Nucleus</location>
    </subcellularLocation>
    <text evidence="2">Cytoplasmic in undifferentiated cells (meristem core) and nuclear in differentiating cells.</text>
</comment>
<comment type="tissue specificity">
    <text evidence="2">Expressed in root and shoot apices and in leaf and flower primordia. Detected in the endosperm, embryo, meristems and in organ primordia, but not in mature cells. Found exclusively in the vascular bundles in mature leaves.</text>
</comment>
<comment type="disruption phenotype">
    <text evidence="2">No visible phenotype when heterozygous. Embryo lethal when homozygous.</text>
</comment>
<comment type="miscellaneous">
    <text evidence="2">Over-expression of IYO activates premature cell differentiation and confers resistance to the elongation inhibitor 6-azauracil.</text>
</comment>
<comment type="similarity">
    <text evidence="4">Belongs to the RPAP1 family.</text>
</comment>
<comment type="sequence caution" evidence="4">
    <conflict type="erroneous gene model prediction">
        <sequence resource="EMBL-CDS" id="CAB37500"/>
    </conflict>
</comment>
<comment type="sequence caution" evidence="4">
    <conflict type="erroneous gene model prediction">
        <sequence resource="EMBL-CDS" id="CAB37501"/>
    </conflict>
</comment>
<comment type="sequence caution" evidence="4">
    <conflict type="erroneous gene model prediction">
        <sequence resource="EMBL-CDS" id="CAB80509"/>
    </conflict>
</comment>
<sequence>MEQSSGRVNPEQPNNVLASLVGSIVEKGISENKPPSKPLPPRPSLLSFPVARHRSHGPHLAPVGSSIAQPKDYNDDQEEEEAEERFMNADSIAAFAKPLQRKEKKDMDLGRWKDMVSGDDPASTHVPQQSRKLKIIETRPPYVASADAATTSSNTLLAARASDQREFVSDKAPFIKNLGTKERVPLNASPPLAVSNGLGTRHASSSLESDIDVENHAKLQTMSPDEIAEAQAELLDKMDPALLSILKKRGEAKLKKRKHSVQGVSITDETAKNSRTEGHFVTPKVMAIPKEKSVVQKPGIAQGFVWDAWTERVEAARDLRFSFDGNVVEEDVVSPAETGGKWSGVESAAERDFLRTEGDPGAAGYTIKEAIALARSVIPGQRCLALHLLASVLDKALNKLCQSRIGYAREEKDKSTDWEAIWAYALGPEPELVLALRMALDDNHASVVIACVKVIQCLLSCSLNENFFNILENMGPHGKDIFTASVFRSKPEIDLGFLRGCYWKYSAKPSNIVAFREEILDDGTEDTDTIQKDVFVAGQDVAAGLVRMDILPRIYHLLETEPTAALEDSIISVTIAIARHSPKCTTAILKYPKFVQTIVKRFQLNKRMDVLSSQINSVRLLKVLARYDQSTCMEFVKNGTFNAVTWHLFQFTSSLDSWVKLGKQNCKLSSTLMVEQLRFWKVCIHSGCCVSRFPELFPALCLWLSCPSFEKLREKNLISEFTSVSNEAYLVLEAFAETLPNMYSQNIPRNESGTWDWSYVSPMIDSALSWITLAPQLLKWEKGIESVSVSTTTLLWLYSGVMRTISKVLEKISAEGEEEPLPWLPEFVPKIGLAIIKHKLLSFSVADVSRFGKDSSRCSSFMEYLCFLRERSQDDELALASVNCLHGLTRTIVSIQNLIESARSKMKAPHQVSISTGDESVLANGILAESLAELTSVSCSFRDSVSSEWPIVQSIELHKRGGLAPGVGLGWGASGGGFWSTRVLLAQAGAGLLSLFLNISLSDSQNDQGSVGFMDKVNSALAMCLIAGPRDYLLVERAFEYVLRPHALEHLACCIKSNKKNISFEWECSEGDYHRMSSMLASHFRHRWLQQKGRSIAEEGVSGVRKGTVGLETIHEDGEMSNSSTQDKKSDSSTIEWAHQRMPLPPHWFLSAISAVHSGKTSTGPPESTELLEVAKAGVFFLAGLESSSGFGSLPSPVVSVPLVWKFHALSTVLLVGMDIIEDKNTRNLYNYLQELYGQFLDEARLNHRDTELLRFKSDIHENYSTFLEMVVEQYAAVSYGDVVYGRQVSVYLHQCVEHSVRLSAWTVLSNARVLELLPSLDKCLGEADGYLEPVEENEAVLEAYLKSWTCGALDRAATRGSVAYTLVVHHFSSLVFCNQAKDKVSLRNKIVKTLVRDLSRKRHREGMMLDLLRYKKGSANAMEEEVIAAETEKRMEVLKEGCEGNSTLLLELEKLKSAALCGRR</sequence>
<proteinExistence type="evidence at protein level"/>
<organism>
    <name type="scientific">Arabidopsis thaliana</name>
    <name type="common">Mouse-ear cress</name>
    <dbReference type="NCBI Taxonomy" id="3702"/>
    <lineage>
        <taxon>Eukaryota</taxon>
        <taxon>Viridiplantae</taxon>
        <taxon>Streptophyta</taxon>
        <taxon>Embryophyta</taxon>
        <taxon>Tracheophyta</taxon>
        <taxon>Spermatophyta</taxon>
        <taxon>Magnoliopsida</taxon>
        <taxon>eudicotyledons</taxon>
        <taxon>Gunneridae</taxon>
        <taxon>Pentapetalae</taxon>
        <taxon>rosids</taxon>
        <taxon>malvids</taxon>
        <taxon>Brassicales</taxon>
        <taxon>Brassicaceae</taxon>
        <taxon>Camelineae</taxon>
        <taxon>Arabidopsis</taxon>
    </lineage>
</organism>
<dbReference type="EMBL" id="AL035539">
    <property type="protein sequence ID" value="CAB37500.1"/>
    <property type="status" value="ALT_SEQ"/>
    <property type="molecule type" value="Genomic_DNA"/>
</dbReference>
<dbReference type="EMBL" id="AL035540">
    <property type="protein sequence ID" value="CAB37501.1"/>
    <property type="status" value="ALT_SEQ"/>
    <property type="molecule type" value="Genomic_DNA"/>
</dbReference>
<dbReference type="EMBL" id="AL161593">
    <property type="protein sequence ID" value="CAB80509.1"/>
    <property type="status" value="ALT_SEQ"/>
    <property type="molecule type" value="Genomic_DNA"/>
</dbReference>
<dbReference type="EMBL" id="CP002687">
    <property type="protein sequence ID" value="AEE86929.1"/>
    <property type="molecule type" value="Genomic_DNA"/>
</dbReference>
<dbReference type="EMBL" id="BT005439">
    <property type="protein sequence ID" value="AAO63859.1"/>
    <property type="molecule type" value="mRNA"/>
</dbReference>
<dbReference type="EMBL" id="AK117387">
    <property type="protein sequence ID" value="BAC42056.1"/>
    <property type="molecule type" value="mRNA"/>
</dbReference>
<dbReference type="PIR" id="T05672">
    <property type="entry name" value="T05672"/>
</dbReference>
<dbReference type="PIR" id="T05673">
    <property type="entry name" value="T05673"/>
</dbReference>
<dbReference type="RefSeq" id="NP_195557.2">
    <property type="nucleotide sequence ID" value="NM_120006.3"/>
</dbReference>
<dbReference type="SMR" id="Q8GYU3"/>
<dbReference type="FunCoup" id="Q8GYU3">
    <property type="interactions" value="2889"/>
</dbReference>
<dbReference type="IntAct" id="Q8GYU3">
    <property type="interactions" value="1"/>
</dbReference>
<dbReference type="STRING" id="3702.Q8GYU3"/>
<dbReference type="PaxDb" id="3702-AT4G38440.1"/>
<dbReference type="ProteomicsDB" id="238966"/>
<dbReference type="EnsemblPlants" id="AT4G38440.1">
    <property type="protein sequence ID" value="AT4G38440.1"/>
    <property type="gene ID" value="AT4G38440"/>
</dbReference>
<dbReference type="GeneID" id="830001"/>
<dbReference type="Gramene" id="AT4G38440.1">
    <property type="protein sequence ID" value="AT4G38440.1"/>
    <property type="gene ID" value="AT4G38440"/>
</dbReference>
<dbReference type="KEGG" id="ath:AT4G38440"/>
<dbReference type="Araport" id="AT4G38440"/>
<dbReference type="TAIR" id="AT4G38440">
    <property type="gene designation" value="IYO"/>
</dbReference>
<dbReference type="eggNOG" id="KOG4732">
    <property type="taxonomic scope" value="Eukaryota"/>
</dbReference>
<dbReference type="HOGENOM" id="CLU_002899_1_0_1"/>
<dbReference type="InParanoid" id="Q8GYU3"/>
<dbReference type="OMA" id="RGGFWKY"/>
<dbReference type="PhylomeDB" id="Q8GYU3"/>
<dbReference type="PRO" id="PR:Q8GYU3"/>
<dbReference type="Proteomes" id="UP000006548">
    <property type="component" value="Chromosome 4"/>
</dbReference>
<dbReference type="ExpressionAtlas" id="Q8GYU3">
    <property type="expression patterns" value="baseline and differential"/>
</dbReference>
<dbReference type="GO" id="GO:0005737">
    <property type="term" value="C:cytoplasm"/>
    <property type="evidence" value="ECO:0007669"/>
    <property type="project" value="UniProtKB-SubCell"/>
</dbReference>
<dbReference type="GO" id="GO:0005634">
    <property type="term" value="C:nucleus"/>
    <property type="evidence" value="ECO:0000314"/>
    <property type="project" value="TAIR"/>
</dbReference>
<dbReference type="GO" id="GO:0030154">
    <property type="term" value="P:cell differentiation"/>
    <property type="evidence" value="ECO:0000315"/>
    <property type="project" value="TAIR"/>
</dbReference>
<dbReference type="InterPro" id="IPR016024">
    <property type="entry name" value="ARM-type_fold"/>
</dbReference>
<dbReference type="InterPro" id="IPR055326">
    <property type="entry name" value="MINIYO"/>
</dbReference>
<dbReference type="InterPro" id="IPR013929">
    <property type="entry name" value="RNA_pol_II_AP1_C"/>
</dbReference>
<dbReference type="InterPro" id="IPR013930">
    <property type="entry name" value="RNA_pol_II_AP1_N"/>
</dbReference>
<dbReference type="PANTHER" id="PTHR47605">
    <property type="entry name" value="TRANSCRIPTIONAL ELONGATION REGULATOR MINIYO"/>
    <property type="match status" value="1"/>
</dbReference>
<dbReference type="PANTHER" id="PTHR47605:SF2">
    <property type="entry name" value="TRANSCRIPTIONAL ELONGATION REGULATOR MINIYO"/>
    <property type="match status" value="1"/>
</dbReference>
<dbReference type="Pfam" id="PF08620">
    <property type="entry name" value="RPAP1_C"/>
    <property type="match status" value="1"/>
</dbReference>
<dbReference type="Pfam" id="PF08621">
    <property type="entry name" value="RPAP1_N"/>
    <property type="match status" value="1"/>
</dbReference>
<dbReference type="SUPFAM" id="SSF48371">
    <property type="entry name" value="ARM repeat"/>
    <property type="match status" value="1"/>
</dbReference>
<accession>Q8GYU3</accession>
<accession>Q9SVE1</accession>
<accession>Q9SZM5</accession>
<gene>
    <name evidence="3" type="primary">IYO</name>
    <name evidence="3" type="synonym">MINIYO</name>
    <name evidence="5" type="ordered locus">At4g38440</name>
    <name evidence="7" type="ORF">F20M13.10</name>
    <name evidence="6" type="ORF">F22I13.210</name>
</gene>
<feature type="chain" id="PRO_0000433607" description="Transcriptional elongation regulator MINIYO">
    <location>
        <begin position="1"/>
        <end position="1465"/>
    </location>
</feature>
<feature type="region of interest" description="Disordered" evidence="1">
    <location>
        <begin position="27"/>
        <end position="85"/>
    </location>
</feature>
<feature type="region of interest" description="Disordered" evidence="1">
    <location>
        <begin position="186"/>
        <end position="211"/>
    </location>
</feature>
<feature type="region of interest" description="Disordered" evidence="1">
    <location>
        <begin position="1113"/>
        <end position="1135"/>
    </location>
</feature>
<feature type="mutagenesis site" description="In iyo-1; delayed onset of cell differentiation in all meristems, but no effect on the binding to NRPB3 and NRPB10L." evidence="2">
    <original>G</original>
    <variation>E</variation>
    <location>
        <position position="962"/>
    </location>
</feature>
<keyword id="KW-0963">Cytoplasm</keyword>
<keyword id="KW-0221">Differentiation</keyword>
<keyword id="KW-0539">Nucleus</keyword>
<keyword id="KW-1185">Reference proteome</keyword>
<keyword id="KW-0804">Transcription</keyword>
<keyword id="KW-0805">Transcription regulation</keyword>
<evidence type="ECO:0000256" key="1">
    <source>
        <dbReference type="SAM" id="MobiDB-lite"/>
    </source>
</evidence>
<evidence type="ECO:0000269" key="2">
    <source>
    </source>
</evidence>
<evidence type="ECO:0000303" key="3">
    <source>
    </source>
</evidence>
<evidence type="ECO:0000305" key="4"/>
<evidence type="ECO:0000312" key="5">
    <source>
        <dbReference type="Araport" id="AT4G38440"/>
    </source>
</evidence>
<evidence type="ECO:0000312" key="6">
    <source>
        <dbReference type="EMBL" id="BAC42056.1"/>
    </source>
</evidence>
<evidence type="ECO:0000312" key="7">
    <source>
        <dbReference type="EMBL" id="CAB37501.1"/>
    </source>
</evidence>